<keyword id="KW-0028">Amino-acid biosynthesis</keyword>
<keyword id="KW-0055">Arginine biosynthesis</keyword>
<keyword id="KW-0963">Cytoplasm</keyword>
<keyword id="KW-0238">DNA-binding</keyword>
<keyword id="KW-0678">Repressor</keyword>
<keyword id="KW-0804">Transcription</keyword>
<keyword id="KW-0805">Transcription regulation</keyword>
<comment type="function">
    <text evidence="1">Regulates arginine biosynthesis genes.</text>
</comment>
<comment type="pathway">
    <text>Amino-acid biosynthesis; L-arginine biosynthesis [regulation].</text>
</comment>
<comment type="subcellular location">
    <subcellularLocation>
        <location evidence="1">Cytoplasm</location>
    </subcellularLocation>
</comment>
<comment type="similarity">
    <text evidence="1">Belongs to the ArgR family.</text>
</comment>
<proteinExistence type="inferred from homology"/>
<protein>
    <recommendedName>
        <fullName evidence="1">Arginine repressor</fullName>
    </recommendedName>
</protein>
<accession>B2K2N4</accession>
<evidence type="ECO:0000255" key="1">
    <source>
        <dbReference type="HAMAP-Rule" id="MF_00173"/>
    </source>
</evidence>
<gene>
    <name evidence="1" type="primary">argR</name>
    <name type="ordered locus">YPTS_0489</name>
</gene>
<organism>
    <name type="scientific">Yersinia pseudotuberculosis serotype IB (strain PB1/+)</name>
    <dbReference type="NCBI Taxonomy" id="502801"/>
    <lineage>
        <taxon>Bacteria</taxon>
        <taxon>Pseudomonadati</taxon>
        <taxon>Pseudomonadota</taxon>
        <taxon>Gammaproteobacteria</taxon>
        <taxon>Enterobacterales</taxon>
        <taxon>Yersiniaceae</taxon>
        <taxon>Yersinia</taxon>
    </lineage>
</organism>
<sequence>MRNPAKQEDLIKAFKALLKEEKFSSQGEIVLALQEEGFENINQSKVSRMLTKFGAVRTRNAKMEMVYCLPAELGVPTTSSPLKNLVLDVDYNDSVVVINTSPGAAQLIARLLDSLGKAEGILGSIAGDDTIFTTPARGFTVKQLHEAILRLFEQEL</sequence>
<feature type="chain" id="PRO_1000097895" description="Arginine repressor">
    <location>
        <begin position="1"/>
        <end position="156"/>
    </location>
</feature>
<name>ARGR_YERPB</name>
<dbReference type="EMBL" id="CP001048">
    <property type="protein sequence ID" value="ACC87475.1"/>
    <property type="molecule type" value="Genomic_DNA"/>
</dbReference>
<dbReference type="RefSeq" id="WP_002210173.1">
    <property type="nucleotide sequence ID" value="NZ_CP009780.1"/>
</dbReference>
<dbReference type="SMR" id="B2K2N4"/>
<dbReference type="GeneID" id="57975197"/>
<dbReference type="KEGG" id="ypb:YPTS_0489"/>
<dbReference type="PATRIC" id="fig|502801.10.peg.4163"/>
<dbReference type="UniPathway" id="UPA00068"/>
<dbReference type="GO" id="GO:0005737">
    <property type="term" value="C:cytoplasm"/>
    <property type="evidence" value="ECO:0007669"/>
    <property type="project" value="UniProtKB-SubCell"/>
</dbReference>
<dbReference type="GO" id="GO:0034618">
    <property type="term" value="F:arginine binding"/>
    <property type="evidence" value="ECO:0007669"/>
    <property type="project" value="InterPro"/>
</dbReference>
<dbReference type="GO" id="GO:0003677">
    <property type="term" value="F:DNA binding"/>
    <property type="evidence" value="ECO:0007669"/>
    <property type="project" value="UniProtKB-KW"/>
</dbReference>
<dbReference type="GO" id="GO:0003700">
    <property type="term" value="F:DNA-binding transcription factor activity"/>
    <property type="evidence" value="ECO:0007669"/>
    <property type="project" value="UniProtKB-UniRule"/>
</dbReference>
<dbReference type="GO" id="GO:0006526">
    <property type="term" value="P:L-arginine biosynthetic process"/>
    <property type="evidence" value="ECO:0007669"/>
    <property type="project" value="UniProtKB-UniPathway"/>
</dbReference>
<dbReference type="GO" id="GO:0051259">
    <property type="term" value="P:protein complex oligomerization"/>
    <property type="evidence" value="ECO:0007669"/>
    <property type="project" value="InterPro"/>
</dbReference>
<dbReference type="GO" id="GO:1900079">
    <property type="term" value="P:regulation of arginine biosynthetic process"/>
    <property type="evidence" value="ECO:0007669"/>
    <property type="project" value="UniProtKB-UniRule"/>
</dbReference>
<dbReference type="FunFam" id="1.10.10.10:FF:000074">
    <property type="entry name" value="Arginine repressor"/>
    <property type="match status" value="1"/>
</dbReference>
<dbReference type="FunFam" id="3.30.1360.40:FF:000004">
    <property type="entry name" value="Arginine repressor"/>
    <property type="match status" value="1"/>
</dbReference>
<dbReference type="Gene3D" id="3.30.1360.40">
    <property type="match status" value="1"/>
</dbReference>
<dbReference type="Gene3D" id="1.10.10.10">
    <property type="entry name" value="Winged helix-like DNA-binding domain superfamily/Winged helix DNA-binding domain"/>
    <property type="match status" value="1"/>
</dbReference>
<dbReference type="HAMAP" id="MF_00173">
    <property type="entry name" value="Arg_repressor"/>
    <property type="match status" value="1"/>
</dbReference>
<dbReference type="InterPro" id="IPR001669">
    <property type="entry name" value="Arg_repress"/>
</dbReference>
<dbReference type="InterPro" id="IPR020899">
    <property type="entry name" value="Arg_repress_C"/>
</dbReference>
<dbReference type="InterPro" id="IPR036251">
    <property type="entry name" value="Arg_repress_C_sf"/>
</dbReference>
<dbReference type="InterPro" id="IPR020900">
    <property type="entry name" value="Arg_repress_DNA-bd"/>
</dbReference>
<dbReference type="InterPro" id="IPR036388">
    <property type="entry name" value="WH-like_DNA-bd_sf"/>
</dbReference>
<dbReference type="InterPro" id="IPR036390">
    <property type="entry name" value="WH_DNA-bd_sf"/>
</dbReference>
<dbReference type="NCBIfam" id="TIGR01529">
    <property type="entry name" value="argR_whole"/>
    <property type="match status" value="1"/>
</dbReference>
<dbReference type="NCBIfam" id="NF003457">
    <property type="entry name" value="PRK05066.1"/>
    <property type="match status" value="1"/>
</dbReference>
<dbReference type="PANTHER" id="PTHR34471">
    <property type="entry name" value="ARGININE REPRESSOR"/>
    <property type="match status" value="1"/>
</dbReference>
<dbReference type="PANTHER" id="PTHR34471:SF1">
    <property type="entry name" value="ARGININE REPRESSOR"/>
    <property type="match status" value="1"/>
</dbReference>
<dbReference type="Pfam" id="PF01316">
    <property type="entry name" value="Arg_repressor"/>
    <property type="match status" value="1"/>
</dbReference>
<dbReference type="Pfam" id="PF02863">
    <property type="entry name" value="Arg_repressor_C"/>
    <property type="match status" value="1"/>
</dbReference>
<dbReference type="PRINTS" id="PR01467">
    <property type="entry name" value="ARGREPRESSOR"/>
</dbReference>
<dbReference type="SUPFAM" id="SSF55252">
    <property type="entry name" value="C-terminal domain of arginine repressor"/>
    <property type="match status" value="1"/>
</dbReference>
<dbReference type="SUPFAM" id="SSF46785">
    <property type="entry name" value="Winged helix' DNA-binding domain"/>
    <property type="match status" value="1"/>
</dbReference>
<reference key="1">
    <citation type="submission" date="2008-04" db="EMBL/GenBank/DDBJ databases">
        <title>Complete sequence of Yersinia pseudotuberculosis PB1/+.</title>
        <authorList>
            <person name="Copeland A."/>
            <person name="Lucas S."/>
            <person name="Lapidus A."/>
            <person name="Glavina del Rio T."/>
            <person name="Dalin E."/>
            <person name="Tice H."/>
            <person name="Bruce D."/>
            <person name="Goodwin L."/>
            <person name="Pitluck S."/>
            <person name="Munk A.C."/>
            <person name="Brettin T."/>
            <person name="Detter J.C."/>
            <person name="Han C."/>
            <person name="Tapia R."/>
            <person name="Schmutz J."/>
            <person name="Larimer F."/>
            <person name="Land M."/>
            <person name="Hauser L."/>
            <person name="Challacombe J.F."/>
            <person name="Green L."/>
            <person name="Lindler L.E."/>
            <person name="Nikolich M.P."/>
            <person name="Richardson P."/>
        </authorList>
    </citation>
    <scope>NUCLEOTIDE SEQUENCE [LARGE SCALE GENOMIC DNA]</scope>
    <source>
        <strain>PB1/+</strain>
    </source>
</reference>